<sequence>MIKWLTRPADYAPVWQDMRAFTAGRGAATPDEVWLCEHAPVYTLGQAGKPEHLLNPGAIPVVMCDRGGQVTYHGPGQVVAYTLFDLRRAGLFVREYVRLLEDAAIGTLDDFGVPGACRKPGAPGVYVPLGPAGELAKIAALGIKIRNGYAYHGVALNVDMDLSPFLGINPCGYEGLVTVDMAACGVRRDLVDVGQRLAERLLAAMPEPAGATR</sequence>
<organism>
    <name type="scientific">Bordetella petrii (strain ATCC BAA-461 / DSM 12804 / CCUG 43448)</name>
    <dbReference type="NCBI Taxonomy" id="340100"/>
    <lineage>
        <taxon>Bacteria</taxon>
        <taxon>Pseudomonadati</taxon>
        <taxon>Pseudomonadota</taxon>
        <taxon>Betaproteobacteria</taxon>
        <taxon>Burkholderiales</taxon>
        <taxon>Alcaligenaceae</taxon>
        <taxon>Bordetella</taxon>
    </lineage>
</organism>
<gene>
    <name evidence="1" type="primary">lipB</name>
    <name type="ordered locus">Bpet4804</name>
</gene>
<feature type="chain" id="PRO_1000089439" description="Octanoyltransferase">
    <location>
        <begin position="1"/>
        <end position="213"/>
    </location>
</feature>
<feature type="domain" description="BPL/LPL catalytic" evidence="2">
    <location>
        <begin position="27"/>
        <end position="209"/>
    </location>
</feature>
<feature type="active site" description="Acyl-thioester intermediate" evidence="1">
    <location>
        <position position="171"/>
    </location>
</feature>
<feature type="binding site" evidence="1">
    <location>
        <begin position="66"/>
        <end position="73"/>
    </location>
    <ligand>
        <name>substrate</name>
    </ligand>
</feature>
<feature type="binding site" evidence="1">
    <location>
        <begin position="140"/>
        <end position="142"/>
    </location>
    <ligand>
        <name>substrate</name>
    </ligand>
</feature>
<feature type="binding site" evidence="1">
    <location>
        <begin position="153"/>
        <end position="155"/>
    </location>
    <ligand>
        <name>substrate</name>
    </ligand>
</feature>
<feature type="site" description="Lowers pKa of active site Cys" evidence="1">
    <location>
        <position position="137"/>
    </location>
</feature>
<proteinExistence type="inferred from homology"/>
<comment type="function">
    <text evidence="1">Catalyzes the transfer of endogenously produced octanoic acid from octanoyl-acyl-carrier-protein onto the lipoyl domains of lipoate-dependent enzymes. Lipoyl-ACP can also act as a substrate although octanoyl-ACP is likely to be the physiological substrate.</text>
</comment>
<comment type="catalytic activity">
    <reaction evidence="1">
        <text>octanoyl-[ACP] + L-lysyl-[protein] = N(6)-octanoyl-L-lysyl-[protein] + holo-[ACP] + H(+)</text>
        <dbReference type="Rhea" id="RHEA:17665"/>
        <dbReference type="Rhea" id="RHEA-COMP:9636"/>
        <dbReference type="Rhea" id="RHEA-COMP:9685"/>
        <dbReference type="Rhea" id="RHEA-COMP:9752"/>
        <dbReference type="Rhea" id="RHEA-COMP:9928"/>
        <dbReference type="ChEBI" id="CHEBI:15378"/>
        <dbReference type="ChEBI" id="CHEBI:29969"/>
        <dbReference type="ChEBI" id="CHEBI:64479"/>
        <dbReference type="ChEBI" id="CHEBI:78463"/>
        <dbReference type="ChEBI" id="CHEBI:78809"/>
        <dbReference type="EC" id="2.3.1.181"/>
    </reaction>
</comment>
<comment type="pathway">
    <text evidence="1">Protein modification; protein lipoylation via endogenous pathway; protein N(6)-(lipoyl)lysine from octanoyl-[acyl-carrier-protein]: step 1/2.</text>
</comment>
<comment type="subcellular location">
    <subcellularLocation>
        <location evidence="1">Cytoplasm</location>
    </subcellularLocation>
</comment>
<comment type="miscellaneous">
    <text evidence="1">In the reaction, the free carboxyl group of octanoic acid is attached via an amide linkage to the epsilon-amino group of a specific lysine residue of lipoyl domains of lipoate-dependent enzymes.</text>
</comment>
<comment type="similarity">
    <text evidence="1">Belongs to the LipB family.</text>
</comment>
<keyword id="KW-0012">Acyltransferase</keyword>
<keyword id="KW-0963">Cytoplasm</keyword>
<keyword id="KW-0808">Transferase</keyword>
<protein>
    <recommendedName>
        <fullName evidence="1">Octanoyltransferase</fullName>
        <ecNumber evidence="1">2.3.1.181</ecNumber>
    </recommendedName>
    <alternativeName>
        <fullName evidence="1">Lipoate-protein ligase B</fullName>
    </alternativeName>
    <alternativeName>
        <fullName evidence="1">Lipoyl/octanoyl transferase</fullName>
    </alternativeName>
    <alternativeName>
        <fullName evidence="1">Octanoyl-[acyl-carrier-protein]-protein N-octanoyltransferase</fullName>
    </alternativeName>
</protein>
<accession>A9IH67</accession>
<reference key="1">
    <citation type="journal article" date="2008" name="BMC Genomics">
        <title>The missing link: Bordetella petrii is endowed with both the metabolic versatility of environmental bacteria and virulence traits of pathogenic Bordetellae.</title>
        <authorList>
            <person name="Gross R."/>
            <person name="Guzman C.A."/>
            <person name="Sebaihia M."/>
            <person name="Martin dos Santos V.A.P."/>
            <person name="Pieper D.H."/>
            <person name="Koebnik R."/>
            <person name="Lechner M."/>
            <person name="Bartels D."/>
            <person name="Buhrmester J."/>
            <person name="Choudhuri J.V."/>
            <person name="Ebensen T."/>
            <person name="Gaigalat L."/>
            <person name="Herrmann S."/>
            <person name="Khachane A.N."/>
            <person name="Larisch C."/>
            <person name="Link S."/>
            <person name="Linke B."/>
            <person name="Meyer F."/>
            <person name="Mormann S."/>
            <person name="Nakunst D."/>
            <person name="Rueckert C."/>
            <person name="Schneiker-Bekel S."/>
            <person name="Schulze K."/>
            <person name="Voerholter F.-J."/>
            <person name="Yevsa T."/>
            <person name="Engle J.T."/>
            <person name="Goldman W.E."/>
            <person name="Puehler A."/>
            <person name="Goebel U.B."/>
            <person name="Goesmann A."/>
            <person name="Bloecker H."/>
            <person name="Kaiser O."/>
            <person name="Martinez-Arias R."/>
        </authorList>
    </citation>
    <scope>NUCLEOTIDE SEQUENCE [LARGE SCALE GENOMIC DNA]</scope>
    <source>
        <strain>ATCC BAA-461 / DSM 12804 / CCUG 43448</strain>
    </source>
</reference>
<evidence type="ECO:0000255" key="1">
    <source>
        <dbReference type="HAMAP-Rule" id="MF_00013"/>
    </source>
</evidence>
<evidence type="ECO:0000255" key="2">
    <source>
        <dbReference type="PROSITE-ProRule" id="PRU01067"/>
    </source>
</evidence>
<name>LIPB_BORPD</name>
<dbReference type="EC" id="2.3.1.181" evidence="1"/>
<dbReference type="EMBL" id="AM902716">
    <property type="protein sequence ID" value="CAP45156.1"/>
    <property type="molecule type" value="Genomic_DNA"/>
</dbReference>
<dbReference type="SMR" id="A9IH67"/>
<dbReference type="STRING" id="94624.Bpet4804"/>
<dbReference type="KEGG" id="bpt:Bpet4804"/>
<dbReference type="eggNOG" id="COG0321">
    <property type="taxonomic scope" value="Bacteria"/>
</dbReference>
<dbReference type="UniPathway" id="UPA00538">
    <property type="reaction ID" value="UER00592"/>
</dbReference>
<dbReference type="Proteomes" id="UP000001225">
    <property type="component" value="Chromosome"/>
</dbReference>
<dbReference type="GO" id="GO:0005737">
    <property type="term" value="C:cytoplasm"/>
    <property type="evidence" value="ECO:0007669"/>
    <property type="project" value="UniProtKB-SubCell"/>
</dbReference>
<dbReference type="GO" id="GO:0033819">
    <property type="term" value="F:lipoyl(octanoyl) transferase activity"/>
    <property type="evidence" value="ECO:0007669"/>
    <property type="project" value="UniProtKB-EC"/>
</dbReference>
<dbReference type="GO" id="GO:0036211">
    <property type="term" value="P:protein modification process"/>
    <property type="evidence" value="ECO:0007669"/>
    <property type="project" value="InterPro"/>
</dbReference>
<dbReference type="CDD" id="cd16444">
    <property type="entry name" value="LipB"/>
    <property type="match status" value="1"/>
</dbReference>
<dbReference type="FunFam" id="3.30.930.10:FF:000020">
    <property type="entry name" value="Octanoyltransferase"/>
    <property type="match status" value="1"/>
</dbReference>
<dbReference type="Gene3D" id="3.30.930.10">
    <property type="entry name" value="Bira Bifunctional Protein, Domain 2"/>
    <property type="match status" value="1"/>
</dbReference>
<dbReference type="HAMAP" id="MF_00013">
    <property type="entry name" value="LipB"/>
    <property type="match status" value="1"/>
</dbReference>
<dbReference type="InterPro" id="IPR045864">
    <property type="entry name" value="aa-tRNA-synth_II/BPL/LPL"/>
</dbReference>
<dbReference type="InterPro" id="IPR004143">
    <property type="entry name" value="BPL_LPL_catalytic"/>
</dbReference>
<dbReference type="InterPro" id="IPR000544">
    <property type="entry name" value="Octanoyltransferase"/>
</dbReference>
<dbReference type="InterPro" id="IPR020605">
    <property type="entry name" value="Octanoyltransferase_CS"/>
</dbReference>
<dbReference type="NCBIfam" id="TIGR00214">
    <property type="entry name" value="lipB"/>
    <property type="match status" value="1"/>
</dbReference>
<dbReference type="NCBIfam" id="NF010922">
    <property type="entry name" value="PRK14342.1"/>
    <property type="match status" value="1"/>
</dbReference>
<dbReference type="PANTHER" id="PTHR10993:SF7">
    <property type="entry name" value="LIPOYLTRANSFERASE 2, MITOCHONDRIAL-RELATED"/>
    <property type="match status" value="1"/>
</dbReference>
<dbReference type="PANTHER" id="PTHR10993">
    <property type="entry name" value="OCTANOYLTRANSFERASE"/>
    <property type="match status" value="1"/>
</dbReference>
<dbReference type="Pfam" id="PF21948">
    <property type="entry name" value="LplA-B_cat"/>
    <property type="match status" value="1"/>
</dbReference>
<dbReference type="PIRSF" id="PIRSF016262">
    <property type="entry name" value="LPLase"/>
    <property type="match status" value="1"/>
</dbReference>
<dbReference type="SUPFAM" id="SSF55681">
    <property type="entry name" value="Class II aaRS and biotin synthetases"/>
    <property type="match status" value="1"/>
</dbReference>
<dbReference type="PROSITE" id="PS51733">
    <property type="entry name" value="BPL_LPL_CATALYTIC"/>
    <property type="match status" value="1"/>
</dbReference>
<dbReference type="PROSITE" id="PS01313">
    <property type="entry name" value="LIPB"/>
    <property type="match status" value="1"/>
</dbReference>